<accession>P37664</accession>
<accession>Q2M7L1</accession>
<gene>
    <name type="primary">yiaC</name>
    <name type="ordered locus">b3550</name>
    <name type="ordered locus">JW3519</name>
</gene>
<keyword id="KW-0012">Acyltransferase</keyword>
<keyword id="KW-1185">Reference proteome</keyword>
<keyword id="KW-0808">Transferase</keyword>
<organism>
    <name type="scientific">Escherichia coli (strain K12)</name>
    <dbReference type="NCBI Taxonomy" id="83333"/>
    <lineage>
        <taxon>Bacteria</taxon>
        <taxon>Pseudomonadati</taxon>
        <taxon>Pseudomonadota</taxon>
        <taxon>Gammaproteobacteria</taxon>
        <taxon>Enterobacterales</taxon>
        <taxon>Enterobacteriaceae</taxon>
        <taxon>Escherichia</taxon>
    </lineage>
</organism>
<name>YIAC_ECOLI</name>
<dbReference type="EC" id="2.3.1.-" evidence="2"/>
<dbReference type="EMBL" id="M34827">
    <property type="status" value="NOT_ANNOTATED_CDS"/>
    <property type="molecule type" value="Genomic_DNA"/>
</dbReference>
<dbReference type="EMBL" id="U00039">
    <property type="protein sequence ID" value="AAB18527.1"/>
    <property type="molecule type" value="Genomic_DNA"/>
</dbReference>
<dbReference type="EMBL" id="U00096">
    <property type="protein sequence ID" value="AAC76574.1"/>
    <property type="molecule type" value="Genomic_DNA"/>
</dbReference>
<dbReference type="EMBL" id="AP009048">
    <property type="protein sequence ID" value="BAE77745.1"/>
    <property type="molecule type" value="Genomic_DNA"/>
</dbReference>
<dbReference type="PIR" id="S47771">
    <property type="entry name" value="S47771"/>
</dbReference>
<dbReference type="RefSeq" id="NP_418006.1">
    <property type="nucleotide sequence ID" value="NC_000913.3"/>
</dbReference>
<dbReference type="RefSeq" id="WP_000617473.1">
    <property type="nucleotide sequence ID" value="NZ_SSZK01000068.1"/>
</dbReference>
<dbReference type="SMR" id="P37664"/>
<dbReference type="BioGRID" id="4261556">
    <property type="interactions" value="7"/>
</dbReference>
<dbReference type="BioGRID" id="850814">
    <property type="interactions" value="1"/>
</dbReference>
<dbReference type="FunCoup" id="P37664">
    <property type="interactions" value="137"/>
</dbReference>
<dbReference type="IntAct" id="P37664">
    <property type="interactions" value="3"/>
</dbReference>
<dbReference type="STRING" id="511145.b3550"/>
<dbReference type="PaxDb" id="511145-b3550"/>
<dbReference type="EnsemblBacteria" id="AAC76574">
    <property type="protein sequence ID" value="AAC76574"/>
    <property type="gene ID" value="b3550"/>
</dbReference>
<dbReference type="GeneID" id="946460"/>
<dbReference type="KEGG" id="ecj:JW3519"/>
<dbReference type="KEGG" id="eco:b3550"/>
<dbReference type="KEGG" id="ecoc:C3026_19245"/>
<dbReference type="PATRIC" id="fig|1411691.4.peg.3164"/>
<dbReference type="EchoBASE" id="EB2179"/>
<dbReference type="eggNOG" id="COG0456">
    <property type="taxonomic scope" value="Bacteria"/>
</dbReference>
<dbReference type="HOGENOM" id="CLU_013985_21_2_6"/>
<dbReference type="InParanoid" id="P37664"/>
<dbReference type="OMA" id="RAVNFYH"/>
<dbReference type="OrthoDB" id="9789605at2"/>
<dbReference type="PhylomeDB" id="P37664"/>
<dbReference type="BioCyc" id="EcoCyc:EG12270-MONOMER"/>
<dbReference type="BioCyc" id="MetaCyc:EG12270-MONOMER"/>
<dbReference type="BRENDA" id="2.3.1.286">
    <property type="organism ID" value="2026"/>
</dbReference>
<dbReference type="PRO" id="PR:P37664"/>
<dbReference type="Proteomes" id="UP000000625">
    <property type="component" value="Chromosome"/>
</dbReference>
<dbReference type="GO" id="GO:0061733">
    <property type="term" value="F:protein-lysine-acetyltransferase activity"/>
    <property type="evidence" value="ECO:0000314"/>
    <property type="project" value="EcoCyc"/>
</dbReference>
<dbReference type="CDD" id="cd04301">
    <property type="entry name" value="NAT_SF"/>
    <property type="match status" value="1"/>
</dbReference>
<dbReference type="Gene3D" id="3.40.630.30">
    <property type="match status" value="1"/>
</dbReference>
<dbReference type="InterPro" id="IPR016181">
    <property type="entry name" value="Acyl_CoA_acyltransferase"/>
</dbReference>
<dbReference type="InterPro" id="IPR000182">
    <property type="entry name" value="GNAT_dom"/>
</dbReference>
<dbReference type="NCBIfam" id="NF007853">
    <property type="entry name" value="PRK10562.1"/>
    <property type="match status" value="1"/>
</dbReference>
<dbReference type="PANTHER" id="PTHR43800">
    <property type="entry name" value="PEPTIDYL-LYSINE N-ACETYLTRANSFERASE YJAB"/>
    <property type="match status" value="1"/>
</dbReference>
<dbReference type="PANTHER" id="PTHR43800:SF1">
    <property type="entry name" value="PEPTIDYL-LYSINE N-ACETYLTRANSFERASE YJAB"/>
    <property type="match status" value="1"/>
</dbReference>
<dbReference type="Pfam" id="PF00583">
    <property type="entry name" value="Acetyltransf_1"/>
    <property type="match status" value="1"/>
</dbReference>
<dbReference type="SUPFAM" id="SSF55729">
    <property type="entry name" value="Acyl-CoA N-acyltransferases (Nat)"/>
    <property type="match status" value="1"/>
</dbReference>
<dbReference type="PROSITE" id="PS51186">
    <property type="entry name" value="GNAT"/>
    <property type="match status" value="1"/>
</dbReference>
<reference key="1">
    <citation type="journal article" date="1990" name="J. Bacteriol.">
        <title>Cloning and nucleotide sequence of bisC, the structural gene for biotin sulfoxide reductase in Escherichia coli.</title>
        <authorList>
            <person name="Pierson D.E."/>
            <person name="Campbell A."/>
        </authorList>
    </citation>
    <scope>NUCLEOTIDE SEQUENCE [GENOMIC DNA]</scope>
</reference>
<reference key="2">
    <citation type="journal article" date="1994" name="Nucleic Acids Res.">
        <title>Analysis of the Escherichia coli genome. V. DNA sequence of the region from 76.0 to 81.5 minutes.</title>
        <authorList>
            <person name="Sofia H.J."/>
            <person name="Burland V."/>
            <person name="Daniels D.L."/>
            <person name="Plunkett G. III"/>
            <person name="Blattner F.R."/>
        </authorList>
    </citation>
    <scope>NUCLEOTIDE SEQUENCE [LARGE SCALE GENOMIC DNA]</scope>
    <source>
        <strain>K12 / MG1655 / ATCC 47076</strain>
    </source>
</reference>
<reference key="3">
    <citation type="journal article" date="1997" name="Science">
        <title>The complete genome sequence of Escherichia coli K-12.</title>
        <authorList>
            <person name="Blattner F.R."/>
            <person name="Plunkett G. III"/>
            <person name="Bloch C.A."/>
            <person name="Perna N.T."/>
            <person name="Burland V."/>
            <person name="Riley M."/>
            <person name="Collado-Vides J."/>
            <person name="Glasner J.D."/>
            <person name="Rode C.K."/>
            <person name="Mayhew G.F."/>
            <person name="Gregor J."/>
            <person name="Davis N.W."/>
            <person name="Kirkpatrick H.A."/>
            <person name="Goeden M.A."/>
            <person name="Rose D.J."/>
            <person name="Mau B."/>
            <person name="Shao Y."/>
        </authorList>
    </citation>
    <scope>NUCLEOTIDE SEQUENCE [LARGE SCALE GENOMIC DNA]</scope>
    <source>
        <strain>K12 / MG1655 / ATCC 47076</strain>
    </source>
</reference>
<reference key="4">
    <citation type="journal article" date="2006" name="Mol. Syst. Biol.">
        <title>Highly accurate genome sequences of Escherichia coli K-12 strains MG1655 and W3110.</title>
        <authorList>
            <person name="Hayashi K."/>
            <person name="Morooka N."/>
            <person name="Yamamoto Y."/>
            <person name="Fujita K."/>
            <person name="Isono K."/>
            <person name="Choi S."/>
            <person name="Ohtsubo E."/>
            <person name="Baba T."/>
            <person name="Wanner B.L."/>
            <person name="Mori H."/>
            <person name="Horiuchi T."/>
        </authorList>
    </citation>
    <scope>NUCLEOTIDE SEQUENCE [LARGE SCALE GENOMIC DNA]</scope>
    <source>
        <strain>K12 / W3110 / ATCC 27325 / DSM 5911</strain>
    </source>
</reference>
<reference key="5">
    <citation type="journal article" date="2018" name="MBio">
        <title>Identification of novel protein lysine acetyltransferases in Escherichia coli.</title>
        <authorList>
            <person name="Christensen D.G."/>
            <person name="Meyer J.G."/>
            <person name="Baumgartner J.T."/>
            <person name="D'Souza A.K."/>
            <person name="Nelson W.C."/>
            <person name="Payne S.H."/>
            <person name="Kuhn M.L."/>
            <person name="Schilling B."/>
            <person name="Wolfe A.J."/>
        </authorList>
    </citation>
    <scope>FUNCTION</scope>
    <scope>CATALYTIC ACTIVITY</scope>
    <scope>DISRUPTION PHENOTYPE</scope>
    <scope>MUTAGENESIS OF PHE-70 AND TYR-115</scope>
    <source>
        <strain>K12</strain>
    </source>
</reference>
<reference key="6">
    <citation type="journal article" date="2019" name="MBio">
        <title>Correction for Christensen et al., 'Identification of novel protein lysine acetyltransferases in Escherichia coli'.</title>
        <authorList>
            <person name="Christensen D.G."/>
            <person name="Meyer J.G."/>
            <person name="Baumgartner J.T."/>
            <person name="D'Souza A.K."/>
            <person name="Nelson W.C."/>
            <person name="Payne S.H."/>
            <person name="Kuhn M.L."/>
            <person name="Schilling B."/>
            <person name="Wolfe A.J."/>
        </authorList>
    </citation>
    <scope>ERRATUM OF PUBMED:30352934</scope>
</reference>
<proteinExistence type="evidence at protein level"/>
<protein>
    <recommendedName>
        <fullName evidence="4">Peptidyl-lysine N-acetyltransferase YiaC</fullName>
        <ecNumber evidence="2">2.3.1.-</ecNumber>
    </recommendedName>
    <alternativeName>
        <fullName evidence="3">KAT</fullName>
    </alternativeName>
</protein>
<feature type="chain" id="PRO_0000074614" description="Peptidyl-lysine N-acetyltransferase YiaC">
    <location>
        <begin position="1"/>
        <end position="146"/>
    </location>
</feature>
<feature type="domain" description="N-acetyltransferase" evidence="1">
    <location>
        <begin position="1"/>
        <end position="143"/>
    </location>
</feature>
<feature type="mutagenesis site" description="Decreases activity." evidence="2">
    <original>F</original>
    <variation>A</variation>
    <location>
        <position position="70"/>
    </location>
</feature>
<feature type="mutagenesis site" description="Loss of activity. Unable to inhibit motility." evidence="2">
    <original>Y</original>
    <variation>A</variation>
    <location>
        <position position="115"/>
    </location>
</feature>
<comment type="function">
    <text evidence="2">N-epsilon-lysine acetyltransferase that catalyzes acetylation of a large number of proteins. Overexpression inhibits motility.</text>
</comment>
<comment type="catalytic activity">
    <reaction evidence="2">
        <text>L-lysyl-[protein] + acetyl-CoA = N(6)-acetyl-L-lysyl-[protein] + CoA + H(+)</text>
        <dbReference type="Rhea" id="RHEA:45948"/>
        <dbReference type="Rhea" id="RHEA-COMP:9752"/>
        <dbReference type="Rhea" id="RHEA-COMP:10731"/>
        <dbReference type="ChEBI" id="CHEBI:15378"/>
        <dbReference type="ChEBI" id="CHEBI:29969"/>
        <dbReference type="ChEBI" id="CHEBI:57287"/>
        <dbReference type="ChEBI" id="CHEBI:57288"/>
        <dbReference type="ChEBI" id="CHEBI:61930"/>
    </reaction>
</comment>
<comment type="disruption phenotype">
    <text evidence="2">Mutant shows the same motility as wild-type strain.</text>
</comment>
<comment type="similarity">
    <text evidence="4">Belongs to the acetyltransferase family.</text>
</comment>
<comment type="sequence caution" evidence="4">
    <conflict type="frameshift">
        <sequence resource="EMBL" id="M34827"/>
    </conflict>
</comment>
<evidence type="ECO:0000255" key="1">
    <source>
        <dbReference type="PROSITE-ProRule" id="PRU00532"/>
    </source>
</evidence>
<evidence type="ECO:0000269" key="2">
    <source>
    </source>
</evidence>
<evidence type="ECO:0000303" key="3">
    <source>
    </source>
</evidence>
<evidence type="ECO:0000305" key="4"/>
<sequence length="146" mass="17104">MIREAQRSELPAILELWLESTTWGHPFIKANYWRDCIPLVRDAYLANAQNWVWEEDGKLLGFVSIMEGRFLAAMFVAPKAVRRGIGKALMQYVQQRHPHLMLEVYQKNQPAINFYQAQGFHIVDCAWQDETQLPTWIMSWPVVQTL</sequence>